<proteinExistence type="inferred from homology"/>
<name>RL20_GEOSE</name>
<reference key="1">
    <citation type="journal article" date="1989" name="Mol. Gen. Genet.">
        <title>Cloning and characterization of a gene cluster from Bacillus stearothermophilus comprising infC, rpmI and rplT.</title>
        <authorList>
            <person name="Pon C.L."/>
            <person name="Brombach M."/>
            <person name="Thamm S."/>
            <person name="Gualerzi C.O."/>
        </authorList>
    </citation>
    <scope>NUCLEOTIDE SEQUENCE [GENOMIC DNA]</scope>
</reference>
<dbReference type="EMBL" id="X16188">
    <property type="protein sequence ID" value="CAA34314.1"/>
    <property type="molecule type" value="Genomic_DNA"/>
</dbReference>
<dbReference type="PIR" id="S05348">
    <property type="entry name" value="R5BS20"/>
</dbReference>
<dbReference type="SMR" id="P13070"/>
<dbReference type="GO" id="GO:1990904">
    <property type="term" value="C:ribonucleoprotein complex"/>
    <property type="evidence" value="ECO:0007669"/>
    <property type="project" value="UniProtKB-KW"/>
</dbReference>
<dbReference type="GO" id="GO:0005840">
    <property type="term" value="C:ribosome"/>
    <property type="evidence" value="ECO:0007669"/>
    <property type="project" value="UniProtKB-KW"/>
</dbReference>
<dbReference type="GO" id="GO:0019843">
    <property type="term" value="F:rRNA binding"/>
    <property type="evidence" value="ECO:0007669"/>
    <property type="project" value="UniProtKB-UniRule"/>
</dbReference>
<dbReference type="GO" id="GO:0003735">
    <property type="term" value="F:structural constituent of ribosome"/>
    <property type="evidence" value="ECO:0007669"/>
    <property type="project" value="InterPro"/>
</dbReference>
<dbReference type="GO" id="GO:0000027">
    <property type="term" value="P:ribosomal large subunit assembly"/>
    <property type="evidence" value="ECO:0007669"/>
    <property type="project" value="UniProtKB-UniRule"/>
</dbReference>
<dbReference type="GO" id="GO:0006412">
    <property type="term" value="P:translation"/>
    <property type="evidence" value="ECO:0007669"/>
    <property type="project" value="InterPro"/>
</dbReference>
<dbReference type="CDD" id="cd07026">
    <property type="entry name" value="Ribosomal_L20"/>
    <property type="match status" value="1"/>
</dbReference>
<dbReference type="FunFam" id="1.10.1900.20:FF:000001">
    <property type="entry name" value="50S ribosomal protein L20"/>
    <property type="match status" value="1"/>
</dbReference>
<dbReference type="Gene3D" id="6.10.160.10">
    <property type="match status" value="1"/>
</dbReference>
<dbReference type="Gene3D" id="1.10.1900.20">
    <property type="entry name" value="Ribosomal protein L20"/>
    <property type="match status" value="1"/>
</dbReference>
<dbReference type="HAMAP" id="MF_00382">
    <property type="entry name" value="Ribosomal_bL20"/>
    <property type="match status" value="1"/>
</dbReference>
<dbReference type="InterPro" id="IPR005813">
    <property type="entry name" value="Ribosomal_bL20"/>
</dbReference>
<dbReference type="InterPro" id="IPR049946">
    <property type="entry name" value="RIBOSOMAL_L20_CS"/>
</dbReference>
<dbReference type="InterPro" id="IPR035566">
    <property type="entry name" value="Ribosomal_protein_bL20_C"/>
</dbReference>
<dbReference type="NCBIfam" id="TIGR01032">
    <property type="entry name" value="rplT_bact"/>
    <property type="match status" value="1"/>
</dbReference>
<dbReference type="PANTHER" id="PTHR10986">
    <property type="entry name" value="39S RIBOSOMAL PROTEIN L20"/>
    <property type="match status" value="1"/>
</dbReference>
<dbReference type="Pfam" id="PF00453">
    <property type="entry name" value="Ribosomal_L20"/>
    <property type="match status" value="1"/>
</dbReference>
<dbReference type="PRINTS" id="PR00062">
    <property type="entry name" value="RIBOSOMALL20"/>
</dbReference>
<dbReference type="SUPFAM" id="SSF74731">
    <property type="entry name" value="Ribosomal protein L20"/>
    <property type="match status" value="1"/>
</dbReference>
<dbReference type="PROSITE" id="PS00937">
    <property type="entry name" value="RIBOSOMAL_L20"/>
    <property type="match status" value="1"/>
</dbReference>
<feature type="chain" id="PRO_0000177119" description="Large ribosomal subunit protein bL20">
    <location>
        <begin position="1"/>
        <end position="119"/>
    </location>
</feature>
<comment type="function">
    <text>Binds directly to 23S ribosomal RNA and is necessary for the in vitro assembly process of the 50S ribosomal subunit. It is not involved in the protein synthesizing functions of that subunit.</text>
</comment>
<comment type="similarity">
    <text evidence="1">Belongs to the bacterial ribosomal protein bL20 family.</text>
</comment>
<evidence type="ECO:0000305" key="1"/>
<accession>P13070</accession>
<organism>
    <name type="scientific">Geobacillus stearothermophilus</name>
    <name type="common">Bacillus stearothermophilus</name>
    <dbReference type="NCBI Taxonomy" id="1422"/>
    <lineage>
        <taxon>Bacteria</taxon>
        <taxon>Bacillati</taxon>
        <taxon>Bacillota</taxon>
        <taxon>Bacilli</taxon>
        <taxon>Bacillales</taxon>
        <taxon>Anoxybacillaceae</taxon>
        <taxon>Geobacillus</taxon>
    </lineage>
</organism>
<sequence length="119" mass="13664">MPRVKGGPVTRRRRKKVLKLAKGYFGAKHALYRVANQQVMKSLMYAYRDRRQRKRDFRKLWIVRINAAARQNGLSYSRLMHGLKLAGVEVNRKIVADLAVNDQAAFAQLADLAKANLNK</sequence>
<keyword id="KW-0687">Ribonucleoprotein</keyword>
<keyword id="KW-0689">Ribosomal protein</keyword>
<keyword id="KW-0694">RNA-binding</keyword>
<keyword id="KW-0699">rRNA-binding</keyword>
<gene>
    <name type="primary">rplT</name>
</gene>
<protein>
    <recommendedName>
        <fullName evidence="1">Large ribosomal subunit protein bL20</fullName>
    </recommendedName>
    <alternativeName>
        <fullName>50S ribosomal protein L20</fullName>
    </alternativeName>
</protein>